<proteinExistence type="inferred from homology"/>
<dbReference type="EMBL" id="CP001144">
    <property type="protein sequence ID" value="ACH74778.1"/>
    <property type="molecule type" value="Genomic_DNA"/>
</dbReference>
<dbReference type="RefSeq" id="WP_001185666.1">
    <property type="nucleotide sequence ID" value="NC_011205.1"/>
</dbReference>
<dbReference type="SMR" id="B5FTL7"/>
<dbReference type="GeneID" id="92972923"/>
<dbReference type="KEGG" id="sed:SeD_A1501"/>
<dbReference type="HOGENOM" id="CLU_137929_2_2_6"/>
<dbReference type="Proteomes" id="UP000008322">
    <property type="component" value="Chromosome"/>
</dbReference>
<dbReference type="GO" id="GO:0051301">
    <property type="term" value="P:cell division"/>
    <property type="evidence" value="ECO:0007669"/>
    <property type="project" value="UniProtKB-KW"/>
</dbReference>
<dbReference type="GO" id="GO:0032955">
    <property type="term" value="P:regulation of division septum assembly"/>
    <property type="evidence" value="ECO:0007669"/>
    <property type="project" value="InterPro"/>
</dbReference>
<dbReference type="FunFam" id="3.30.1070.10:FF:000001">
    <property type="entry name" value="Cell division topological specificity factor"/>
    <property type="match status" value="1"/>
</dbReference>
<dbReference type="Gene3D" id="3.30.1070.10">
    <property type="entry name" value="Cell division topological specificity factor MinE"/>
    <property type="match status" value="1"/>
</dbReference>
<dbReference type="HAMAP" id="MF_00262">
    <property type="entry name" value="MinE"/>
    <property type="match status" value="1"/>
</dbReference>
<dbReference type="InterPro" id="IPR005527">
    <property type="entry name" value="MinE"/>
</dbReference>
<dbReference type="InterPro" id="IPR036707">
    <property type="entry name" value="MinE_sf"/>
</dbReference>
<dbReference type="NCBIfam" id="TIGR01215">
    <property type="entry name" value="minE"/>
    <property type="match status" value="1"/>
</dbReference>
<dbReference type="NCBIfam" id="NF001422">
    <property type="entry name" value="PRK00296.1"/>
    <property type="match status" value="1"/>
</dbReference>
<dbReference type="Pfam" id="PF03776">
    <property type="entry name" value="MinE"/>
    <property type="match status" value="1"/>
</dbReference>
<dbReference type="SUPFAM" id="SSF55229">
    <property type="entry name" value="Cell division protein MinE topological specificity domain"/>
    <property type="match status" value="1"/>
</dbReference>
<comment type="function">
    <text evidence="1">Prevents the cell division inhibition by proteins MinC and MinD at internal division sites while permitting inhibition at polar sites. This ensures cell division at the proper site by restricting the formation of a division septum at the midpoint of the long axis of the cell.</text>
</comment>
<comment type="similarity">
    <text evidence="1">Belongs to the MinE family.</text>
</comment>
<keyword id="KW-0131">Cell cycle</keyword>
<keyword id="KW-0132">Cell division</keyword>
<protein>
    <recommendedName>
        <fullName evidence="1">Cell division topological specificity factor</fullName>
    </recommendedName>
</protein>
<feature type="chain" id="PRO_1000114238" description="Cell division topological specificity factor">
    <location>
        <begin position="1"/>
        <end position="88"/>
    </location>
</feature>
<sequence length="88" mass="10182">MALLDFFLSRKKSTANIAKERLQIIVAERRRSDAEPHYLPQLRKDILEVICKYVQIDPEMVTVQLEQKDGDISILELNVTLPEAEESK</sequence>
<accession>B5FTL7</accession>
<organism>
    <name type="scientific">Salmonella dublin (strain CT_02021853)</name>
    <dbReference type="NCBI Taxonomy" id="439851"/>
    <lineage>
        <taxon>Bacteria</taxon>
        <taxon>Pseudomonadati</taxon>
        <taxon>Pseudomonadota</taxon>
        <taxon>Gammaproteobacteria</taxon>
        <taxon>Enterobacterales</taxon>
        <taxon>Enterobacteriaceae</taxon>
        <taxon>Salmonella</taxon>
    </lineage>
</organism>
<name>MINE_SALDC</name>
<reference key="1">
    <citation type="journal article" date="2011" name="J. Bacteriol.">
        <title>Comparative genomics of 28 Salmonella enterica isolates: evidence for CRISPR-mediated adaptive sublineage evolution.</title>
        <authorList>
            <person name="Fricke W.F."/>
            <person name="Mammel M.K."/>
            <person name="McDermott P.F."/>
            <person name="Tartera C."/>
            <person name="White D.G."/>
            <person name="Leclerc J.E."/>
            <person name="Ravel J."/>
            <person name="Cebula T.A."/>
        </authorList>
    </citation>
    <scope>NUCLEOTIDE SEQUENCE [LARGE SCALE GENOMIC DNA]</scope>
    <source>
        <strain>CT_02021853</strain>
    </source>
</reference>
<gene>
    <name evidence="1" type="primary">minE</name>
    <name type="ordered locus">SeD_A1501</name>
</gene>
<evidence type="ECO:0000255" key="1">
    <source>
        <dbReference type="HAMAP-Rule" id="MF_00262"/>
    </source>
</evidence>